<reference key="1">
    <citation type="submission" date="2006-03" db="EMBL/GenBank/DDBJ databases">
        <title>Complete sequence of Methylobacillus flagellatus KT.</title>
        <authorList>
            <consortium name="US DOE Joint Genome Institute"/>
            <person name="Copeland A."/>
            <person name="Lucas S."/>
            <person name="Lapidus A."/>
            <person name="Barry K."/>
            <person name="Detter J.C."/>
            <person name="Glavina del Rio T."/>
            <person name="Hammon N."/>
            <person name="Israni S."/>
            <person name="Dalin E."/>
            <person name="Tice H."/>
            <person name="Pitluck S."/>
            <person name="Brettin T."/>
            <person name="Bruce D."/>
            <person name="Han C."/>
            <person name="Tapia R."/>
            <person name="Saunders E."/>
            <person name="Gilna P."/>
            <person name="Schmutz J."/>
            <person name="Larimer F."/>
            <person name="Land M."/>
            <person name="Kyrpides N."/>
            <person name="Anderson I."/>
            <person name="Richardson P."/>
        </authorList>
    </citation>
    <scope>NUCLEOTIDE SEQUENCE [LARGE SCALE GENOMIC DNA]</scope>
    <source>
        <strain>ATCC 51484 / DSM 6875 / VKM B-1610 / KT</strain>
    </source>
</reference>
<keyword id="KW-0963">Cytoplasm</keyword>
<keyword id="KW-0251">Elongation factor</keyword>
<keyword id="KW-0648">Protein biosynthesis</keyword>
<keyword id="KW-1185">Reference proteome</keyword>
<dbReference type="EMBL" id="CP000284">
    <property type="protein sequence ID" value="ABE49797.1"/>
    <property type="molecule type" value="Genomic_DNA"/>
</dbReference>
<dbReference type="RefSeq" id="WP_011479751.1">
    <property type="nucleotide sequence ID" value="NC_007947.1"/>
</dbReference>
<dbReference type="SMR" id="Q1H140"/>
<dbReference type="STRING" id="265072.Mfla_1529"/>
<dbReference type="KEGG" id="mfa:Mfla_1529"/>
<dbReference type="eggNOG" id="COG0264">
    <property type="taxonomic scope" value="Bacteria"/>
</dbReference>
<dbReference type="HOGENOM" id="CLU_047155_0_2_4"/>
<dbReference type="OrthoDB" id="9808348at2"/>
<dbReference type="Proteomes" id="UP000002440">
    <property type="component" value="Chromosome"/>
</dbReference>
<dbReference type="GO" id="GO:0005737">
    <property type="term" value="C:cytoplasm"/>
    <property type="evidence" value="ECO:0007669"/>
    <property type="project" value="UniProtKB-SubCell"/>
</dbReference>
<dbReference type="GO" id="GO:0003746">
    <property type="term" value="F:translation elongation factor activity"/>
    <property type="evidence" value="ECO:0007669"/>
    <property type="project" value="UniProtKB-UniRule"/>
</dbReference>
<dbReference type="CDD" id="cd14275">
    <property type="entry name" value="UBA_EF-Ts"/>
    <property type="match status" value="1"/>
</dbReference>
<dbReference type="FunFam" id="1.10.8.10:FF:000001">
    <property type="entry name" value="Elongation factor Ts"/>
    <property type="match status" value="1"/>
</dbReference>
<dbReference type="Gene3D" id="1.10.286.20">
    <property type="match status" value="1"/>
</dbReference>
<dbReference type="Gene3D" id="1.10.8.10">
    <property type="entry name" value="DNA helicase RuvA subunit, C-terminal domain"/>
    <property type="match status" value="1"/>
</dbReference>
<dbReference type="Gene3D" id="3.30.479.20">
    <property type="entry name" value="Elongation factor Ts, dimerisation domain"/>
    <property type="match status" value="2"/>
</dbReference>
<dbReference type="HAMAP" id="MF_00050">
    <property type="entry name" value="EF_Ts"/>
    <property type="match status" value="1"/>
</dbReference>
<dbReference type="InterPro" id="IPR036402">
    <property type="entry name" value="EF-Ts_dimer_sf"/>
</dbReference>
<dbReference type="InterPro" id="IPR001816">
    <property type="entry name" value="Transl_elong_EFTs/EF1B"/>
</dbReference>
<dbReference type="InterPro" id="IPR014039">
    <property type="entry name" value="Transl_elong_EFTs/EF1B_dimer"/>
</dbReference>
<dbReference type="InterPro" id="IPR009060">
    <property type="entry name" value="UBA-like_sf"/>
</dbReference>
<dbReference type="NCBIfam" id="TIGR00116">
    <property type="entry name" value="tsf"/>
    <property type="match status" value="1"/>
</dbReference>
<dbReference type="PANTHER" id="PTHR11741">
    <property type="entry name" value="ELONGATION FACTOR TS"/>
    <property type="match status" value="1"/>
</dbReference>
<dbReference type="PANTHER" id="PTHR11741:SF0">
    <property type="entry name" value="ELONGATION FACTOR TS, MITOCHONDRIAL"/>
    <property type="match status" value="1"/>
</dbReference>
<dbReference type="Pfam" id="PF00889">
    <property type="entry name" value="EF_TS"/>
    <property type="match status" value="1"/>
</dbReference>
<dbReference type="SUPFAM" id="SSF54713">
    <property type="entry name" value="Elongation factor Ts (EF-Ts), dimerisation domain"/>
    <property type="match status" value="2"/>
</dbReference>
<dbReference type="SUPFAM" id="SSF46934">
    <property type="entry name" value="UBA-like"/>
    <property type="match status" value="1"/>
</dbReference>
<gene>
    <name evidence="1" type="primary">tsf</name>
    <name type="ordered locus">Mfla_1529</name>
</gene>
<accession>Q1H140</accession>
<comment type="function">
    <text evidence="1">Associates with the EF-Tu.GDP complex and induces the exchange of GDP to GTP. It remains bound to the aminoacyl-tRNA.EF-Tu.GTP complex up to the GTP hydrolysis stage on the ribosome.</text>
</comment>
<comment type="subcellular location">
    <subcellularLocation>
        <location evidence="1">Cytoplasm</location>
    </subcellularLocation>
</comment>
<comment type="similarity">
    <text evidence="1">Belongs to the EF-Ts family.</text>
</comment>
<sequence>MAEITASMVKELRERTDAPMMDCKKALTEAEGDMARAEEILRVRFGNKASKAAGRVAAEGVVAVSIKADGKLGAIVEINSETDFCAKNADFLAFVAQVAEAAATEKPADVAALSALKIDGGSVEDIRTQLIGKIGENITVRRFAVTEAKGKLVSYVHGGKIGVLVDLVGGDETLGKDIAMHIAAAKPKSLDASGIPAELIEAERRVAIEKAKEAGKPEAMLDKIADGTVQKFLKEVTLLSQPFVKDDKQTIEQLLKANNASIASFTMYVVGEGIEKVVTDFAAEVAAAAKV</sequence>
<protein>
    <recommendedName>
        <fullName evidence="1">Elongation factor Ts</fullName>
        <shortName evidence="1">EF-Ts</shortName>
    </recommendedName>
</protein>
<name>EFTS_METFK</name>
<evidence type="ECO:0000255" key="1">
    <source>
        <dbReference type="HAMAP-Rule" id="MF_00050"/>
    </source>
</evidence>
<feature type="chain" id="PRO_0000323457" description="Elongation factor Ts">
    <location>
        <begin position="1"/>
        <end position="291"/>
    </location>
</feature>
<feature type="region of interest" description="Involved in Mg(2+) ion dislocation from EF-Tu" evidence="1">
    <location>
        <begin position="82"/>
        <end position="85"/>
    </location>
</feature>
<proteinExistence type="inferred from homology"/>
<organism>
    <name type="scientific">Methylobacillus flagellatus (strain ATCC 51484 / DSM 6875 / VKM B-1610 / KT)</name>
    <dbReference type="NCBI Taxonomy" id="265072"/>
    <lineage>
        <taxon>Bacteria</taxon>
        <taxon>Pseudomonadati</taxon>
        <taxon>Pseudomonadota</taxon>
        <taxon>Betaproteobacteria</taxon>
        <taxon>Nitrosomonadales</taxon>
        <taxon>Methylophilaceae</taxon>
        <taxon>Methylobacillus</taxon>
    </lineage>
</organism>